<proteinExistence type="inferred from homology"/>
<sequence>MLIILKENIRTLGKLGEVVKVKPGYARNFLFPQRKAVKATKENLTKLEEQRLLLEEENIKRLNVAKELALSLHDKFVVLIKQASEDGKIFGSVTTREIAKILLQEGHVIDHRSLSFGGVSIKNLGEYQVNVELHSEVVVPITIYVVKSETDANELRQVKLQNQKSEQQEAEQDANKEATDGDDS</sequence>
<feature type="chain" id="PRO_0000236618" description="Large ribosomal subunit protein bL9">
    <location>
        <begin position="1"/>
        <end position="184"/>
    </location>
</feature>
<feature type="region of interest" description="Disordered" evidence="2">
    <location>
        <begin position="160"/>
        <end position="184"/>
    </location>
</feature>
<feature type="compositionally biased region" description="Basic and acidic residues" evidence="2">
    <location>
        <begin position="173"/>
        <end position="184"/>
    </location>
</feature>
<protein>
    <recommendedName>
        <fullName evidence="1">Large ribosomal subunit protein bL9</fullName>
    </recommendedName>
    <alternativeName>
        <fullName evidence="3">50S ribosomal protein L9</fullName>
    </alternativeName>
</protein>
<evidence type="ECO:0000255" key="1">
    <source>
        <dbReference type="HAMAP-Rule" id="MF_00503"/>
    </source>
</evidence>
<evidence type="ECO:0000256" key="2">
    <source>
        <dbReference type="SAM" id="MobiDB-lite"/>
    </source>
</evidence>
<evidence type="ECO:0000305" key="3"/>
<organism>
    <name type="scientific">Wolbachia pipientis wMel</name>
    <dbReference type="NCBI Taxonomy" id="163164"/>
    <lineage>
        <taxon>Bacteria</taxon>
        <taxon>Pseudomonadati</taxon>
        <taxon>Pseudomonadota</taxon>
        <taxon>Alphaproteobacteria</taxon>
        <taxon>Rickettsiales</taxon>
        <taxon>Anaplasmataceae</taxon>
        <taxon>Wolbachieae</taxon>
        <taxon>Wolbachia</taxon>
    </lineage>
</organism>
<keyword id="KW-0687">Ribonucleoprotein</keyword>
<keyword id="KW-0689">Ribosomal protein</keyword>
<keyword id="KW-0694">RNA-binding</keyword>
<keyword id="KW-0699">rRNA-binding</keyword>
<gene>
    <name evidence="1" type="primary">rplI</name>
    <name type="ordered locus">WD_0783</name>
</gene>
<accession>Q73GZ5</accession>
<name>RL9_WOLPM</name>
<reference key="1">
    <citation type="journal article" date="2004" name="PLoS Biol.">
        <title>Phylogenomics of the reproductive parasite Wolbachia pipientis wMel: a streamlined genome overrun by mobile genetic elements.</title>
        <authorList>
            <person name="Wu M."/>
            <person name="Sun L.V."/>
            <person name="Vamathevan J.J."/>
            <person name="Riegler M."/>
            <person name="DeBoy R.T."/>
            <person name="Brownlie J.C."/>
            <person name="McGraw E.A."/>
            <person name="Martin W."/>
            <person name="Esser C."/>
            <person name="Ahmadinejad N."/>
            <person name="Wiegand C."/>
            <person name="Madupu R."/>
            <person name="Beanan M.J."/>
            <person name="Brinkac L.M."/>
            <person name="Daugherty S.C."/>
            <person name="Durkin A.S."/>
            <person name="Kolonay J.F."/>
            <person name="Nelson W.C."/>
            <person name="Mohamoud Y."/>
            <person name="Lee P."/>
            <person name="Berry K.J."/>
            <person name="Young M.B."/>
            <person name="Utterback T.R."/>
            <person name="Weidman J.F."/>
            <person name="Nierman W.C."/>
            <person name="Paulsen I.T."/>
            <person name="Nelson K.E."/>
            <person name="Tettelin H."/>
            <person name="O'Neill S.L."/>
            <person name="Eisen J.A."/>
        </authorList>
    </citation>
    <scope>NUCLEOTIDE SEQUENCE [LARGE SCALE GENOMIC DNA]</scope>
</reference>
<comment type="function">
    <text evidence="1">Binds to the 23S rRNA.</text>
</comment>
<comment type="similarity">
    <text evidence="1">Belongs to the bacterial ribosomal protein bL9 family.</text>
</comment>
<dbReference type="EMBL" id="AE017196">
    <property type="protein sequence ID" value="AAS14471.1"/>
    <property type="molecule type" value="Genomic_DNA"/>
</dbReference>
<dbReference type="RefSeq" id="WP_006279792.1">
    <property type="nucleotide sequence ID" value="NZ_OX384529.1"/>
</dbReference>
<dbReference type="SMR" id="Q73GZ5"/>
<dbReference type="EnsemblBacteria" id="AAS14471">
    <property type="protein sequence ID" value="AAS14471"/>
    <property type="gene ID" value="WD_0783"/>
</dbReference>
<dbReference type="GeneID" id="70036262"/>
<dbReference type="KEGG" id="wol:WD_0783"/>
<dbReference type="eggNOG" id="COG0359">
    <property type="taxonomic scope" value="Bacteria"/>
</dbReference>
<dbReference type="Proteomes" id="UP000008215">
    <property type="component" value="Chromosome"/>
</dbReference>
<dbReference type="GO" id="GO:1990904">
    <property type="term" value="C:ribonucleoprotein complex"/>
    <property type="evidence" value="ECO:0007669"/>
    <property type="project" value="UniProtKB-KW"/>
</dbReference>
<dbReference type="GO" id="GO:0005840">
    <property type="term" value="C:ribosome"/>
    <property type="evidence" value="ECO:0007669"/>
    <property type="project" value="UniProtKB-KW"/>
</dbReference>
<dbReference type="GO" id="GO:0019843">
    <property type="term" value="F:rRNA binding"/>
    <property type="evidence" value="ECO:0007669"/>
    <property type="project" value="UniProtKB-UniRule"/>
</dbReference>
<dbReference type="GO" id="GO:0003735">
    <property type="term" value="F:structural constituent of ribosome"/>
    <property type="evidence" value="ECO:0007669"/>
    <property type="project" value="InterPro"/>
</dbReference>
<dbReference type="GO" id="GO:0006412">
    <property type="term" value="P:translation"/>
    <property type="evidence" value="ECO:0007669"/>
    <property type="project" value="UniProtKB-UniRule"/>
</dbReference>
<dbReference type="Gene3D" id="3.10.430.100">
    <property type="entry name" value="Ribosomal protein L9, C-terminal domain"/>
    <property type="match status" value="1"/>
</dbReference>
<dbReference type="Gene3D" id="3.40.5.10">
    <property type="entry name" value="Ribosomal protein L9, N-terminal domain"/>
    <property type="match status" value="1"/>
</dbReference>
<dbReference type="HAMAP" id="MF_00503">
    <property type="entry name" value="Ribosomal_bL9"/>
    <property type="match status" value="1"/>
</dbReference>
<dbReference type="InterPro" id="IPR000244">
    <property type="entry name" value="Ribosomal_bL9"/>
</dbReference>
<dbReference type="InterPro" id="IPR009027">
    <property type="entry name" value="Ribosomal_bL9/RNase_H1_N"/>
</dbReference>
<dbReference type="InterPro" id="IPR020594">
    <property type="entry name" value="Ribosomal_bL9_bac/chp"/>
</dbReference>
<dbReference type="InterPro" id="IPR020069">
    <property type="entry name" value="Ribosomal_bL9_C"/>
</dbReference>
<dbReference type="InterPro" id="IPR036791">
    <property type="entry name" value="Ribosomal_bL9_C_sf"/>
</dbReference>
<dbReference type="InterPro" id="IPR020070">
    <property type="entry name" value="Ribosomal_bL9_N"/>
</dbReference>
<dbReference type="InterPro" id="IPR036935">
    <property type="entry name" value="Ribosomal_bL9_N_sf"/>
</dbReference>
<dbReference type="NCBIfam" id="TIGR00158">
    <property type="entry name" value="L9"/>
    <property type="match status" value="1"/>
</dbReference>
<dbReference type="PANTHER" id="PTHR21368">
    <property type="entry name" value="50S RIBOSOMAL PROTEIN L9"/>
    <property type="match status" value="1"/>
</dbReference>
<dbReference type="Pfam" id="PF03948">
    <property type="entry name" value="Ribosomal_L9_C"/>
    <property type="match status" value="1"/>
</dbReference>
<dbReference type="Pfam" id="PF01281">
    <property type="entry name" value="Ribosomal_L9_N"/>
    <property type="match status" value="1"/>
</dbReference>
<dbReference type="SUPFAM" id="SSF55658">
    <property type="entry name" value="L9 N-domain-like"/>
    <property type="match status" value="1"/>
</dbReference>
<dbReference type="SUPFAM" id="SSF55653">
    <property type="entry name" value="Ribosomal protein L9 C-domain"/>
    <property type="match status" value="1"/>
</dbReference>
<dbReference type="PROSITE" id="PS00651">
    <property type="entry name" value="RIBOSOMAL_L9"/>
    <property type="match status" value="1"/>
</dbReference>